<organism>
    <name type="scientific">Mycobacterium tuberculosis (strain ATCC 25618 / H37Rv)</name>
    <dbReference type="NCBI Taxonomy" id="83332"/>
    <lineage>
        <taxon>Bacteria</taxon>
        <taxon>Bacillati</taxon>
        <taxon>Actinomycetota</taxon>
        <taxon>Actinomycetes</taxon>
        <taxon>Mycobacteriales</taxon>
        <taxon>Mycobacteriaceae</taxon>
        <taxon>Mycobacterium</taxon>
        <taxon>Mycobacterium tuberculosis complex</taxon>
    </lineage>
</organism>
<comment type="function">
    <text evidence="1 2">Antitoxin component of a type II toxin-antitoxin (TA) system. Upon expression in E.coli neutralizes the toxic effect of cognate toxin VapC20.</text>
</comment>
<comment type="sequence caution" evidence="3">
    <conflict type="erroneous initiation">
        <sequence resource="EMBL-CDS" id="CCP45346"/>
    </conflict>
    <text>Extended N-terminus.</text>
</comment>
<evidence type="ECO:0000269" key="1">
    <source>
    </source>
</evidence>
<evidence type="ECO:0000269" key="2">
    <source>
    </source>
</evidence>
<evidence type="ECO:0000305" key="3">
    <source>
    </source>
</evidence>
<sequence length="73" mass="8199">MKRLQIYIDEDVDRALAVEARRRRTSKAALIREYVAEHLRQPGPDPVDAFVGSFVGEADLSASVDDVVYGKHE</sequence>
<gene>
    <name type="primary">vapB20</name>
    <name type="ordered locus">Rv2550c</name>
</gene>
<proteinExistence type="evidence at protein level"/>
<feature type="chain" id="PRO_0000408066" description="Antitoxin VapB20">
    <location>
        <begin position="1"/>
        <end position="73"/>
    </location>
</feature>
<dbReference type="EMBL" id="AL123456">
    <property type="protein sequence ID" value="CCP45346.1"/>
    <property type="status" value="ALT_INIT"/>
    <property type="molecule type" value="Genomic_DNA"/>
</dbReference>
<dbReference type="PIR" id="B70660">
    <property type="entry name" value="B70660"/>
</dbReference>
<dbReference type="RefSeq" id="NP_217066.1">
    <property type="nucleotide sequence ID" value="NC_000962.3"/>
</dbReference>
<dbReference type="SMR" id="P9WJ45"/>
<dbReference type="STRING" id="83332.Rv2550c"/>
<dbReference type="PaxDb" id="83332-Rv2550c"/>
<dbReference type="DNASU" id="887353"/>
<dbReference type="GeneID" id="887353"/>
<dbReference type="KEGG" id="mtu:Rv2550c"/>
<dbReference type="TubercuList" id="Rv2550c"/>
<dbReference type="InParanoid" id="P9WJ45"/>
<dbReference type="OrthoDB" id="4735331at2"/>
<dbReference type="Proteomes" id="UP000001584">
    <property type="component" value="Chromosome"/>
</dbReference>
<dbReference type="GO" id="GO:0003677">
    <property type="term" value="F:DNA binding"/>
    <property type="evidence" value="ECO:0007669"/>
    <property type="project" value="UniProtKB-KW"/>
</dbReference>
<dbReference type="GO" id="GO:0097351">
    <property type="term" value="F:toxin sequestering activity"/>
    <property type="evidence" value="ECO:0000353"/>
    <property type="project" value="UniProtKB"/>
</dbReference>
<dbReference type="GO" id="GO:0098754">
    <property type="term" value="P:detoxification"/>
    <property type="evidence" value="ECO:0000315"/>
    <property type="project" value="MTBBASE"/>
</dbReference>
<dbReference type="GO" id="GO:0006355">
    <property type="term" value="P:regulation of DNA-templated transcription"/>
    <property type="evidence" value="ECO:0007669"/>
    <property type="project" value="InterPro"/>
</dbReference>
<dbReference type="CDD" id="cd21631">
    <property type="entry name" value="RHH_CopG_NikR-like"/>
    <property type="match status" value="1"/>
</dbReference>
<dbReference type="InterPro" id="IPR002145">
    <property type="entry name" value="CopG"/>
</dbReference>
<dbReference type="Pfam" id="PF01402">
    <property type="entry name" value="RHH_1"/>
    <property type="match status" value="1"/>
</dbReference>
<reference key="1">
    <citation type="journal article" date="1998" name="Nature">
        <title>Deciphering the biology of Mycobacterium tuberculosis from the complete genome sequence.</title>
        <authorList>
            <person name="Cole S.T."/>
            <person name="Brosch R."/>
            <person name="Parkhill J."/>
            <person name="Garnier T."/>
            <person name="Churcher C.M."/>
            <person name="Harris D.E."/>
            <person name="Gordon S.V."/>
            <person name="Eiglmeier K."/>
            <person name="Gas S."/>
            <person name="Barry C.E. III"/>
            <person name="Tekaia F."/>
            <person name="Badcock K."/>
            <person name="Basham D."/>
            <person name="Brown D."/>
            <person name="Chillingworth T."/>
            <person name="Connor R."/>
            <person name="Davies R.M."/>
            <person name="Devlin K."/>
            <person name="Feltwell T."/>
            <person name="Gentles S."/>
            <person name="Hamlin N."/>
            <person name="Holroyd S."/>
            <person name="Hornsby T."/>
            <person name="Jagels K."/>
            <person name="Krogh A."/>
            <person name="McLean J."/>
            <person name="Moule S."/>
            <person name="Murphy L.D."/>
            <person name="Oliver S."/>
            <person name="Osborne J."/>
            <person name="Quail M.A."/>
            <person name="Rajandream M.A."/>
            <person name="Rogers J."/>
            <person name="Rutter S."/>
            <person name="Seeger K."/>
            <person name="Skelton S."/>
            <person name="Squares S."/>
            <person name="Squares R."/>
            <person name="Sulston J.E."/>
            <person name="Taylor K."/>
            <person name="Whitehead S."/>
            <person name="Barrell B.G."/>
        </authorList>
    </citation>
    <scope>NUCLEOTIDE SEQUENCE [LARGE SCALE GENOMIC DNA]</scope>
    <source>
        <strain>ATCC 25618 / H37Rv</strain>
    </source>
</reference>
<reference key="2">
    <citation type="journal article" date="2005" name="Nucleic Acids Res.">
        <title>Toxin-antitoxin loci are highly abundant in free-living but lost from host-associated prokaryotes.</title>
        <authorList>
            <person name="Pandey D.P."/>
            <person name="Gerdes K."/>
        </authorList>
    </citation>
    <scope>POSSIBLE FUNCTION</scope>
    <source>
        <strain>ATCC 25618 / H37Rv</strain>
    </source>
</reference>
<reference key="3">
    <citation type="journal article" date="2009" name="FEMS Microbiol. Lett.">
        <title>Killing activity and rescue function of genome-wide toxin-antitoxin loci of Mycobacterium tuberculosis.</title>
        <authorList>
            <person name="Gupta A."/>
        </authorList>
    </citation>
    <scope>EXPRESSION IN E.COLI</scope>
    <scope>FUNCTION AS AN ANTITOXIN</scope>
    <source>
        <strain>ATCC 25618 / H37Rv</strain>
    </source>
</reference>
<reference key="4">
    <citation type="journal article" date="2013" name="Nat. Commun.">
        <title>VapC20 of Mycobacterium tuberculosis cleaves the sarcin-ricin loop of 23S rRNA.</title>
        <authorList>
            <person name="Winther K.S."/>
            <person name="Brodersen D.E."/>
            <person name="Brown A.K."/>
            <person name="Gerdes K."/>
        </authorList>
    </citation>
    <scope>FUNCTION</scope>
    <source>
        <strain>ATCC 25618 / H37Rv</strain>
    </source>
</reference>
<keyword id="KW-0238">DNA-binding</keyword>
<keyword id="KW-1185">Reference proteome</keyword>
<keyword id="KW-1277">Toxin-antitoxin system</keyword>
<name>VPB20_MYCTU</name>
<accession>P9WJ45</accession>
<accession>L0TA46</accession>
<accession>P95003</accession>
<accession>Q7D6X8</accession>
<protein>
    <recommendedName>
        <fullName>Antitoxin VapB20</fullName>
    </recommendedName>
</protein>